<keyword id="KW-0024">Alternative initiation</keyword>
<keyword id="KW-0167">Capsid protein</keyword>
<keyword id="KW-1139">Helical capsid protein</keyword>
<keyword id="KW-1035">Host cytoplasm</keyword>
<keyword id="KW-1079">Host G2/M cell cycle arrest by virus</keyword>
<keyword id="KW-1048">Host nucleus</keyword>
<keyword id="KW-0945">Host-virus interaction</keyword>
<keyword id="KW-1100">Inhibition of host NF-kappa-B by virus</keyword>
<keyword id="KW-1121">Modulation of host cell cycle by virus</keyword>
<keyword id="KW-1185">Reference proteome</keyword>
<keyword id="KW-0543">Viral nucleoprotein</keyword>
<keyword id="KW-1163">Viral penetration into host nucleus</keyword>
<keyword id="KW-0946">Virion</keyword>
<keyword id="KW-1160">Virus entry into host cell</keyword>
<proteinExistence type="evidence at protein level"/>
<sequence length="370" mass="40939">MPPKRRLVDDADAMEDQDLYEPPASLPKLPGKFLQYTVGGSDPHPGIGHEKDIRQNAVALLDQSRRDMFHTVTPSLVFLCLLIPGLHAAFVHGGVPRESYLSTPVTRGEQTVVKTAKFYGEKTTQRDLTELEISSIFSHCCSLLIGVVIGSSSKIKAGAEQIKKRFKTMMAALNRPSHGETATLLQMFNPHEAIDWINGQPWVGSFVLSLLTTDFESPGKEFMDQIKLVASYAQMTTYTTIKEYLAECMDATLTIPVVAYEIRDFLEVSAKLKEDHADLFPFLGAIRHPDAIKLAPRSFPNLASAAFYWSKKENPTMAGYRASTIQPGASVKETQLARYRRREISRGEDGAELSGEISAIMKMIGVTGLN</sequence>
<protein>
    <recommendedName>
        <fullName>Nucleoprotein</fullName>
        <shortName>N protein</shortName>
    </recommendedName>
    <alternativeName>
        <fullName>Nucleocapsid protein</fullName>
    </alternativeName>
    <alternativeName>
        <fullName>p38</fullName>
    </alternativeName>
    <alternativeName>
        <fullName>p40</fullName>
    </alternativeName>
</protein>
<evidence type="ECO:0000250" key="1"/>
<evidence type="ECO:0000256" key="2">
    <source>
        <dbReference type="SAM" id="MobiDB-lite"/>
    </source>
</evidence>
<evidence type="ECO:0000269" key="3">
    <source>
    </source>
</evidence>
<evidence type="ECO:0000269" key="4">
    <source>
    </source>
</evidence>
<evidence type="ECO:0000269" key="5">
    <source>
    </source>
</evidence>
<evidence type="ECO:0000269" key="6">
    <source>
    </source>
</evidence>
<evidence type="ECO:0000305" key="7"/>
<comment type="function">
    <text evidence="3 4 5">Encapsidates the genome, protecting it from nucleases. The encapsidated genomic RNA is termed the NC and serves as template for transcription and replication. Plays a critical role in the nucleocytoplasmic transport of viral RNP by interaction with other viral proteins. The nuclear export signal is masked by the interaction with the phosphoprotein P. Delays the host cell cycle progression by interacting with the host CDK1-cyclin B1 phase in late G2. Inhibits host NF-kappaB activation.</text>
</comment>
<comment type="subunit">
    <text evidence="4 5 6">Homomultimerizes to form the nucleocapsid (PubMed:19945724). Binds to viral genomic RNA (PubMed:19945724). Interacts with phosphoprotein P (PubMed:19945724, PubMed:9880009). Interacts with host CDK1 (PubMed:14512566); this interaction delays host cell cycle in late G2. Interacts with host NFKB1 (PubMed:25733193).</text>
</comment>
<comment type="subcellular location">
    <subcellularLocation>
        <location evidence="7">Virion</location>
    </subcellularLocation>
    <subcellularLocation>
        <location evidence="3">Host nucleus</location>
    </subcellularLocation>
    <subcellularLocation>
        <location evidence="3">Host cytoplasm</location>
    </subcellularLocation>
    <text evidence="3">Shuttles between the host nucleus and cytoplasm.</text>
</comment>
<comment type="alternative products">
    <event type="alternative initiation"/>
    <isoform>
        <id>P0C797-1</id>
        <name>p40</name>
        <sequence type="displayed"/>
    </isoform>
    <isoform>
        <id>P0C797-2</id>
        <name>p38</name>
        <sequence type="described" ref="VSP_040675"/>
    </isoform>
</comment>
<comment type="miscellaneous">
    <text evidence="1">Isoform P38 does not have the nuclear localization signal, nonetheless it is localized in the nucleus.</text>
</comment>
<organism>
    <name type="scientific">Borna disease virus (strain V)</name>
    <name type="common">BDV</name>
    <dbReference type="NCBI Taxonomy" id="928296"/>
    <lineage>
        <taxon>Viruses</taxon>
        <taxon>Riboviria</taxon>
        <taxon>Orthornavirae</taxon>
        <taxon>Negarnaviricota</taxon>
        <taxon>Haploviricotina</taxon>
        <taxon>Monjiviricetes</taxon>
        <taxon>Mononegavirales</taxon>
        <taxon>Bornaviridae</taxon>
        <taxon>Borna disease virus</taxon>
    </lineage>
</organism>
<reference key="1">
    <citation type="journal article" date="1994" name="Proc. Natl. Acad. Sci. U.S.A.">
        <title>Genomic organization of Borna disease virus.</title>
        <authorList>
            <person name="Briese T."/>
            <person name="Schneemann A."/>
            <person name="Lewis A.J."/>
            <person name="Park Y.-S."/>
            <person name="Kim S."/>
            <person name="Ludwig H."/>
            <person name="Lipkin W.I."/>
        </authorList>
    </citation>
    <scope>NUCLEOTIDE SEQUENCE [GENOMIC RNA]</scope>
</reference>
<reference key="2">
    <citation type="journal article" date="1998" name="J. Gen. Virol.">
        <title>Two domains of the Borna disease virus p40 protein are required for interaction with the p23 protein.</title>
        <authorList>
            <person name="Berg M."/>
            <person name="Ehrenborg C."/>
            <person name="Blomberg J."/>
            <person name="Pipkorn R."/>
            <person name="Berg A.L."/>
        </authorList>
    </citation>
    <scope>INTERACTION WITH PHOSPHOPROTEIN P</scope>
</reference>
<reference key="3">
    <citation type="journal article" date="2001" name="J. Virol.">
        <title>Borna disease virus nucleoprotein requires both nuclear localization and export activities for viral nucleocytoplasmic shuttling.</title>
        <authorList>
            <person name="Kobayashi T."/>
            <person name="Kamitani W."/>
            <person name="Zhang G."/>
            <person name="Watanabe M."/>
            <person name="Tomonaga K."/>
            <person name="Ikuta K."/>
        </authorList>
    </citation>
    <scope>SUBCELLULAR LOCATION</scope>
    <scope>FUNCTION</scope>
</reference>
<reference key="4">
    <citation type="journal article" date="2003" name="J. Virol.">
        <title>Borna disease virus nucleoprotein interacts with the CDC2-cyclin B1 complex.</title>
        <authorList>
            <person name="Planz O."/>
            <person name="Pleschka S."/>
            <person name="Oesterle K."/>
            <person name="Berberich-Siebelt F."/>
            <person name="Ehrhardt C."/>
            <person name="Stitz L."/>
            <person name="Ludwig S."/>
        </authorList>
    </citation>
    <scope>FUNCTION</scope>
    <scope>INTERACTION WITH HOST CDK1</scope>
</reference>
<reference key="5">
    <citation type="journal article" date="2010" name="Virology">
        <title>RNA induced polymerization of the Borna disease virus nucleoprotein.</title>
        <authorList>
            <person name="Hock M."/>
            <person name="Kraus I."/>
            <person name="Schoehn G."/>
            <person name="Jamin M."/>
            <person name="Andrei-Selmer C."/>
            <person name="Garten W."/>
            <person name="Weissenhorn W."/>
        </authorList>
    </citation>
    <scope>SUBUNIT</scope>
</reference>
<reference key="6">
    <citation type="journal article" date="2015" name="Sci. Rep.">
        <title>Borna disease virus possesses an NF-kB inhibitory sequence in the nucleoprotein gene.</title>
        <authorList>
            <person name="Makino A."/>
            <person name="Fujino K."/>
            <person name="Parrish N.F."/>
            <person name="Honda T."/>
            <person name="Tomonaga K."/>
        </authorList>
    </citation>
    <scope>FUNCTION</scope>
    <scope>INTERACTION WITH HOST NFKB1</scope>
</reference>
<feature type="chain" id="PRO_0000405344" description="Nucleoprotein">
    <location>
        <begin position="1"/>
        <end position="370"/>
    </location>
</feature>
<feature type="region of interest" description="Disordered" evidence="2">
    <location>
        <begin position="1"/>
        <end position="25"/>
    </location>
</feature>
<feature type="short sequence motif" description="Nuclear localization signal" evidence="3">
    <location>
        <begin position="3"/>
        <end position="11"/>
    </location>
</feature>
<feature type="short sequence motif" description="Nuclear export signal" evidence="3">
    <location>
        <begin position="128"/>
        <end position="141"/>
    </location>
</feature>
<feature type="compositionally biased region" description="Acidic residues" evidence="2">
    <location>
        <begin position="10"/>
        <end position="19"/>
    </location>
</feature>
<feature type="splice variant" id="VSP_040675" description="In isoform p38." evidence="7">
    <location>
        <begin position="1"/>
        <end position="13"/>
    </location>
</feature>
<gene>
    <name type="primary">N</name>
</gene>
<organismHost>
    <name type="scientific">Bos taurus</name>
    <name type="common">Bovine</name>
    <dbReference type="NCBI Taxonomy" id="9913"/>
</organismHost>
<organismHost>
    <name type="scientific">Bradypodidae</name>
    <name type="common">three-fingered sloths</name>
    <dbReference type="NCBI Taxonomy" id="9352"/>
</organismHost>
<organismHost>
    <name type="scientific">Capra hircus</name>
    <name type="common">Goat</name>
    <dbReference type="NCBI Taxonomy" id="9925"/>
</organismHost>
<organismHost>
    <name type="scientific">Cervidae</name>
    <name type="common">Deer</name>
    <dbReference type="NCBI Taxonomy" id="9850"/>
</organismHost>
<organismHost>
    <name type="scientific">Crocidura leucodon</name>
    <name type="common">Bicoloured white-toothed shrew</name>
    <name type="synonym">Celebes shrew</name>
    <dbReference type="NCBI Taxonomy" id="109474"/>
</organismHost>
<organismHost>
    <name type="scientific">Equidae</name>
    <name type="common">horses</name>
    <dbReference type="NCBI Taxonomy" id="9788"/>
</organismHost>
<organismHost>
    <name type="scientific">Felis catus</name>
    <name type="common">Cat</name>
    <name type="synonym">Felis silvestris catus</name>
    <dbReference type="NCBI Taxonomy" id="9685"/>
</organismHost>
<organismHost>
    <name type="scientific">Hexaprotodon liberiensis</name>
    <name type="common">Pygmy hippopotamus</name>
    <name type="synonym">Choeropsis liberiensis</name>
    <dbReference type="NCBI Taxonomy" id="56798"/>
</organismHost>
<organismHost>
    <name type="scientific">Lama glama</name>
    <name type="common">Llama</name>
    <dbReference type="NCBI Taxonomy" id="9844"/>
</organismHost>
<organismHost>
    <name type="scientific">Oryctolagus cuniculus</name>
    <name type="common">Rabbit</name>
    <dbReference type="NCBI Taxonomy" id="9986"/>
</organismHost>
<organismHost>
    <name type="scientific">Ovis aries</name>
    <name type="common">Sheep</name>
    <dbReference type="NCBI Taxonomy" id="9940"/>
</organismHost>
<organismHost>
    <name type="scientific">Struthio camelus</name>
    <name type="common">Common ostrich</name>
    <dbReference type="NCBI Taxonomy" id="8801"/>
</organismHost>
<organismHost>
    <name type="scientific">Varecia variegata</name>
    <name type="common">Black-and-white ruffed lemur</name>
    <name type="synonym">Lemur variegatus</name>
    <dbReference type="NCBI Taxonomy" id="9455"/>
</organismHost>
<organismHost>
    <name type="scientific">Vicugna pacos</name>
    <name type="common">Alpaca</name>
    <name type="synonym">Lama pacos</name>
    <dbReference type="NCBI Taxonomy" id="30538"/>
</organismHost>
<accession>P0C797</accession>
<accession>Q01552</accession>
<dbReference type="EMBL" id="U04608">
    <property type="protein sequence ID" value="AAA20224.1"/>
    <property type="molecule type" value="Genomic_RNA"/>
</dbReference>
<dbReference type="RefSeq" id="NP_042020.1">
    <property type="nucleotide sequence ID" value="NC_001607.1"/>
</dbReference>
<dbReference type="SMR" id="P0C797"/>
<dbReference type="IntAct" id="P0C797">
    <property type="interactions" value="2"/>
</dbReference>
<dbReference type="Proteomes" id="UP000007804">
    <property type="component" value="Segment"/>
</dbReference>
<dbReference type="GO" id="GO:0019029">
    <property type="term" value="C:helical viral capsid"/>
    <property type="evidence" value="ECO:0007669"/>
    <property type="project" value="UniProtKB-KW"/>
</dbReference>
<dbReference type="GO" id="GO:0043657">
    <property type="term" value="C:host cell"/>
    <property type="evidence" value="ECO:0007669"/>
    <property type="project" value="GOC"/>
</dbReference>
<dbReference type="GO" id="GO:0030430">
    <property type="term" value="C:host cell cytoplasm"/>
    <property type="evidence" value="ECO:0000314"/>
    <property type="project" value="UniProtKB"/>
</dbReference>
<dbReference type="GO" id="GO:0042025">
    <property type="term" value="C:host cell nucleus"/>
    <property type="evidence" value="ECO:0000314"/>
    <property type="project" value="UniProtKB"/>
</dbReference>
<dbReference type="GO" id="GO:0019013">
    <property type="term" value="C:viral nucleocapsid"/>
    <property type="evidence" value="ECO:0007669"/>
    <property type="project" value="UniProtKB-KW"/>
</dbReference>
<dbReference type="GO" id="GO:0046718">
    <property type="term" value="P:symbiont entry into host cell"/>
    <property type="evidence" value="ECO:0007669"/>
    <property type="project" value="UniProtKB-KW"/>
</dbReference>
<dbReference type="GO" id="GO:0039592">
    <property type="term" value="P:symbiont-mediated arrest of host cell cycle during G2/M transition"/>
    <property type="evidence" value="ECO:0000314"/>
    <property type="project" value="UniProtKB"/>
</dbReference>
<dbReference type="GO" id="GO:0085034">
    <property type="term" value="P:symbiont-mediated suppression of host NF-kappaB cascade"/>
    <property type="evidence" value="ECO:0000314"/>
    <property type="project" value="UniProtKB"/>
</dbReference>
<dbReference type="GO" id="GO:0075732">
    <property type="term" value="P:viral penetration into host nucleus"/>
    <property type="evidence" value="ECO:0007669"/>
    <property type="project" value="UniProtKB-KW"/>
</dbReference>
<dbReference type="FunFam" id="1.10.3050.10:FF:000001">
    <property type="entry name" value="Nucleoprotein"/>
    <property type="match status" value="1"/>
</dbReference>
<dbReference type="Gene3D" id="1.10.3040.10">
    <property type="entry name" value="borna disease virus nucleoprotein, domain 1"/>
    <property type="match status" value="1"/>
</dbReference>
<dbReference type="Gene3D" id="1.10.3050.10">
    <property type="entry name" value="borna disease virus nucleoprotein, domain 2"/>
    <property type="match status" value="1"/>
</dbReference>
<dbReference type="InterPro" id="IPR009441">
    <property type="entry name" value="P40_nucleoprot_BD-vir"/>
</dbReference>
<dbReference type="InterPro" id="IPR036260">
    <property type="entry name" value="P40_nucleoprot_sf_BD-vir"/>
</dbReference>
<dbReference type="InterPro" id="IPR015969">
    <property type="entry name" value="P40_nucleoprot_sub1_BD-vir"/>
</dbReference>
<dbReference type="InterPro" id="IPR015970">
    <property type="entry name" value="P40_nucleoprot_sub2_BD-vir"/>
</dbReference>
<dbReference type="Pfam" id="PF06407">
    <property type="entry name" value="BDV_P40"/>
    <property type="match status" value="1"/>
</dbReference>
<dbReference type="SUPFAM" id="SSF101399">
    <property type="entry name" value="P40 nucleoprotein"/>
    <property type="match status" value="1"/>
</dbReference>
<name>NCAP_BDVV</name>